<gene>
    <name evidence="1" type="primary">rsmG</name>
    <name type="ordered locus">Noca_4695</name>
</gene>
<organism>
    <name type="scientific">Nocardioides sp. (strain ATCC BAA-499 / JS614)</name>
    <dbReference type="NCBI Taxonomy" id="196162"/>
    <lineage>
        <taxon>Bacteria</taxon>
        <taxon>Bacillati</taxon>
        <taxon>Actinomycetota</taxon>
        <taxon>Actinomycetes</taxon>
        <taxon>Propionibacteriales</taxon>
        <taxon>Nocardioidaceae</taxon>
        <taxon>Nocardioides</taxon>
    </lineage>
</organism>
<sequence>MTDDVSRETPSVPDVARRVFASDRLSLAERFVELLAGDGVVRGLIGPRETPRLWDRHLLNCALLAQQVPLEATVADLGSGAGLPGVVLAIARPDLRVTLVEPLLRRTTFLEEVVAELGLDRVEVLRARAEALHGDRRFAVVTSRALAPLDRLLGWSMPLVEPTGALLAMKGSAVAEEITAAGPELARWGCATPEVLSLGADLGLAPTVAVRVVWADPGRVSWPIAAPRKRGGQQRRAGHARGTSNRRRGT</sequence>
<proteinExistence type="inferred from homology"/>
<comment type="function">
    <text evidence="1">Specifically methylates the N7 position of guanine in position 518 of 16S rRNA.</text>
</comment>
<comment type="subcellular location">
    <subcellularLocation>
        <location evidence="1">Cytoplasm</location>
    </subcellularLocation>
</comment>
<comment type="similarity">
    <text evidence="1">Belongs to the methyltransferase superfamily. RNA methyltransferase RsmG family.</text>
</comment>
<accession>A1SQV5</accession>
<feature type="chain" id="PRO_0000335386" description="Ribosomal RNA small subunit methyltransferase G">
    <location>
        <begin position="1"/>
        <end position="250"/>
    </location>
</feature>
<feature type="region of interest" description="Disordered" evidence="2">
    <location>
        <begin position="224"/>
        <end position="250"/>
    </location>
</feature>
<feature type="compositionally biased region" description="Basic residues" evidence="2">
    <location>
        <begin position="227"/>
        <end position="250"/>
    </location>
</feature>
<feature type="binding site" evidence="1">
    <location>
        <position position="78"/>
    </location>
    <ligand>
        <name>S-adenosyl-L-methionine</name>
        <dbReference type="ChEBI" id="CHEBI:59789"/>
    </ligand>
</feature>
<feature type="binding site" evidence="1">
    <location>
        <position position="83"/>
    </location>
    <ligand>
        <name>S-adenosyl-L-methionine</name>
        <dbReference type="ChEBI" id="CHEBI:59789"/>
    </ligand>
</feature>
<feature type="binding site" evidence="1">
    <location>
        <begin position="129"/>
        <end position="130"/>
    </location>
    <ligand>
        <name>S-adenosyl-L-methionine</name>
        <dbReference type="ChEBI" id="CHEBI:59789"/>
    </ligand>
</feature>
<feature type="binding site" evidence="1">
    <location>
        <position position="144"/>
    </location>
    <ligand>
        <name>S-adenosyl-L-methionine</name>
        <dbReference type="ChEBI" id="CHEBI:59789"/>
    </ligand>
</feature>
<keyword id="KW-0963">Cytoplasm</keyword>
<keyword id="KW-0489">Methyltransferase</keyword>
<keyword id="KW-1185">Reference proteome</keyword>
<keyword id="KW-0698">rRNA processing</keyword>
<keyword id="KW-0949">S-adenosyl-L-methionine</keyword>
<keyword id="KW-0808">Transferase</keyword>
<protein>
    <recommendedName>
        <fullName evidence="1">Ribosomal RNA small subunit methyltransferase G</fullName>
        <ecNumber evidence="1">2.1.1.-</ecNumber>
    </recommendedName>
    <alternativeName>
        <fullName evidence="1">16S rRNA 7-methylguanosine methyltransferase</fullName>
        <shortName evidence="1">16S rRNA m7G methyltransferase</shortName>
    </alternativeName>
</protein>
<reference key="1">
    <citation type="submission" date="2006-12" db="EMBL/GenBank/DDBJ databases">
        <title>Complete sequence of chromosome 1 of Nocardioides sp. JS614.</title>
        <authorList>
            <person name="Copeland A."/>
            <person name="Lucas S."/>
            <person name="Lapidus A."/>
            <person name="Barry K."/>
            <person name="Detter J.C."/>
            <person name="Glavina del Rio T."/>
            <person name="Hammon N."/>
            <person name="Israni S."/>
            <person name="Dalin E."/>
            <person name="Tice H."/>
            <person name="Pitluck S."/>
            <person name="Thompson L.S."/>
            <person name="Brettin T."/>
            <person name="Bruce D."/>
            <person name="Han C."/>
            <person name="Tapia R."/>
            <person name="Schmutz J."/>
            <person name="Larimer F."/>
            <person name="Land M."/>
            <person name="Hauser L."/>
            <person name="Kyrpides N."/>
            <person name="Kim E."/>
            <person name="Mattes T."/>
            <person name="Gossett J."/>
            <person name="Richardson P."/>
        </authorList>
    </citation>
    <scope>NUCLEOTIDE SEQUENCE [LARGE SCALE GENOMIC DNA]</scope>
    <source>
        <strain>ATCC BAA-499 / JS614</strain>
    </source>
</reference>
<evidence type="ECO:0000255" key="1">
    <source>
        <dbReference type="HAMAP-Rule" id="MF_00074"/>
    </source>
</evidence>
<evidence type="ECO:0000256" key="2">
    <source>
        <dbReference type="SAM" id="MobiDB-lite"/>
    </source>
</evidence>
<name>RSMG_NOCSJ</name>
<dbReference type="EC" id="2.1.1.-" evidence="1"/>
<dbReference type="EMBL" id="CP000509">
    <property type="protein sequence ID" value="ABL84190.1"/>
    <property type="molecule type" value="Genomic_DNA"/>
</dbReference>
<dbReference type="RefSeq" id="WP_011758118.1">
    <property type="nucleotide sequence ID" value="NC_008699.1"/>
</dbReference>
<dbReference type="SMR" id="A1SQV5"/>
<dbReference type="STRING" id="196162.Noca_4695"/>
<dbReference type="KEGG" id="nca:Noca_4695"/>
<dbReference type="eggNOG" id="COG0357">
    <property type="taxonomic scope" value="Bacteria"/>
</dbReference>
<dbReference type="HOGENOM" id="CLU_065341_5_0_11"/>
<dbReference type="OrthoDB" id="9808773at2"/>
<dbReference type="Proteomes" id="UP000000640">
    <property type="component" value="Chromosome"/>
</dbReference>
<dbReference type="GO" id="GO:0005829">
    <property type="term" value="C:cytosol"/>
    <property type="evidence" value="ECO:0007669"/>
    <property type="project" value="TreeGrafter"/>
</dbReference>
<dbReference type="GO" id="GO:0070043">
    <property type="term" value="F:rRNA (guanine-N7-)-methyltransferase activity"/>
    <property type="evidence" value="ECO:0007669"/>
    <property type="project" value="UniProtKB-UniRule"/>
</dbReference>
<dbReference type="CDD" id="cd02440">
    <property type="entry name" value="AdoMet_MTases"/>
    <property type="match status" value="1"/>
</dbReference>
<dbReference type="Gene3D" id="3.40.50.150">
    <property type="entry name" value="Vaccinia Virus protein VP39"/>
    <property type="match status" value="1"/>
</dbReference>
<dbReference type="HAMAP" id="MF_00074">
    <property type="entry name" value="16SrRNA_methyltr_G"/>
    <property type="match status" value="1"/>
</dbReference>
<dbReference type="InterPro" id="IPR003682">
    <property type="entry name" value="rRNA_ssu_MeTfrase_G"/>
</dbReference>
<dbReference type="InterPro" id="IPR029063">
    <property type="entry name" value="SAM-dependent_MTases_sf"/>
</dbReference>
<dbReference type="NCBIfam" id="TIGR00138">
    <property type="entry name" value="rsmG_gidB"/>
    <property type="match status" value="1"/>
</dbReference>
<dbReference type="PANTHER" id="PTHR31760">
    <property type="entry name" value="S-ADENOSYL-L-METHIONINE-DEPENDENT METHYLTRANSFERASES SUPERFAMILY PROTEIN"/>
    <property type="match status" value="1"/>
</dbReference>
<dbReference type="PANTHER" id="PTHR31760:SF0">
    <property type="entry name" value="S-ADENOSYL-L-METHIONINE-DEPENDENT METHYLTRANSFERASES SUPERFAMILY PROTEIN"/>
    <property type="match status" value="1"/>
</dbReference>
<dbReference type="Pfam" id="PF02527">
    <property type="entry name" value="GidB"/>
    <property type="match status" value="1"/>
</dbReference>
<dbReference type="SUPFAM" id="SSF53335">
    <property type="entry name" value="S-adenosyl-L-methionine-dependent methyltransferases"/>
    <property type="match status" value="1"/>
</dbReference>